<reference key="1">
    <citation type="journal article" date="1995" name="Plant Mol. Biol.">
        <title>Characterization of a family of Arabidopsis zinc finger protein cDNAs.</title>
        <authorList>
            <person name="Tague B.W."/>
            <person name="Goodman H.M."/>
        </authorList>
    </citation>
    <scope>NUCLEOTIDE SEQUENCE [MRNA]</scope>
    <source>
        <strain>cv. Landsberg erecta</strain>
        <tissue>Root</tissue>
    </source>
</reference>
<reference key="2">
    <citation type="journal article" date="2000" name="Nature">
        <title>Sequence and analysis of chromosome 1 of the plant Arabidopsis thaliana.</title>
        <authorList>
            <person name="Theologis A."/>
            <person name="Ecker J.R."/>
            <person name="Palm C.J."/>
            <person name="Federspiel N.A."/>
            <person name="Kaul S."/>
            <person name="White O."/>
            <person name="Alonso J."/>
            <person name="Altafi H."/>
            <person name="Araujo R."/>
            <person name="Bowman C.L."/>
            <person name="Brooks S.Y."/>
            <person name="Buehler E."/>
            <person name="Chan A."/>
            <person name="Chao Q."/>
            <person name="Chen H."/>
            <person name="Cheuk R.F."/>
            <person name="Chin C.W."/>
            <person name="Chung M.K."/>
            <person name="Conn L."/>
            <person name="Conway A.B."/>
            <person name="Conway A.R."/>
            <person name="Creasy T.H."/>
            <person name="Dewar K."/>
            <person name="Dunn P."/>
            <person name="Etgu P."/>
            <person name="Feldblyum T.V."/>
            <person name="Feng J.-D."/>
            <person name="Fong B."/>
            <person name="Fujii C.Y."/>
            <person name="Gill J.E."/>
            <person name="Goldsmith A.D."/>
            <person name="Haas B."/>
            <person name="Hansen N.F."/>
            <person name="Hughes B."/>
            <person name="Huizar L."/>
            <person name="Hunter J.L."/>
            <person name="Jenkins J."/>
            <person name="Johnson-Hopson C."/>
            <person name="Khan S."/>
            <person name="Khaykin E."/>
            <person name="Kim C.J."/>
            <person name="Koo H.L."/>
            <person name="Kremenetskaia I."/>
            <person name="Kurtz D.B."/>
            <person name="Kwan A."/>
            <person name="Lam B."/>
            <person name="Langin-Hooper S."/>
            <person name="Lee A."/>
            <person name="Lee J.M."/>
            <person name="Lenz C.A."/>
            <person name="Li J.H."/>
            <person name="Li Y.-P."/>
            <person name="Lin X."/>
            <person name="Liu S.X."/>
            <person name="Liu Z.A."/>
            <person name="Luros J.S."/>
            <person name="Maiti R."/>
            <person name="Marziali A."/>
            <person name="Militscher J."/>
            <person name="Miranda M."/>
            <person name="Nguyen M."/>
            <person name="Nierman W.C."/>
            <person name="Osborne B.I."/>
            <person name="Pai G."/>
            <person name="Peterson J."/>
            <person name="Pham P.K."/>
            <person name="Rizzo M."/>
            <person name="Rooney T."/>
            <person name="Rowley D."/>
            <person name="Sakano H."/>
            <person name="Salzberg S.L."/>
            <person name="Schwartz J.R."/>
            <person name="Shinn P."/>
            <person name="Southwick A.M."/>
            <person name="Sun H."/>
            <person name="Tallon L.J."/>
            <person name="Tambunga G."/>
            <person name="Toriumi M.J."/>
            <person name="Town C.D."/>
            <person name="Utterback T."/>
            <person name="Van Aken S."/>
            <person name="Vaysberg M."/>
            <person name="Vysotskaia V.S."/>
            <person name="Walker M."/>
            <person name="Wu D."/>
            <person name="Yu G."/>
            <person name="Fraser C.M."/>
            <person name="Venter J.C."/>
            <person name="Davis R.W."/>
        </authorList>
    </citation>
    <scope>NUCLEOTIDE SEQUENCE [LARGE SCALE GENOMIC DNA]</scope>
    <source>
        <strain>cv. Columbia</strain>
    </source>
</reference>
<reference key="3">
    <citation type="journal article" date="2017" name="Plant J.">
        <title>Araport11: a complete reannotation of the Arabidopsis thaliana reference genome.</title>
        <authorList>
            <person name="Cheng C.Y."/>
            <person name="Krishnakumar V."/>
            <person name="Chan A.P."/>
            <person name="Thibaud-Nissen F."/>
            <person name="Schobel S."/>
            <person name="Town C.D."/>
        </authorList>
    </citation>
    <scope>GENOME REANNOTATION</scope>
    <source>
        <strain>cv. Columbia</strain>
    </source>
</reference>
<reference key="4">
    <citation type="journal article" date="2003" name="Science">
        <title>Empirical analysis of transcriptional activity in the Arabidopsis genome.</title>
        <authorList>
            <person name="Yamada K."/>
            <person name="Lim J."/>
            <person name="Dale J.M."/>
            <person name="Chen H."/>
            <person name="Shinn P."/>
            <person name="Palm C.J."/>
            <person name="Southwick A.M."/>
            <person name="Wu H.C."/>
            <person name="Kim C.J."/>
            <person name="Nguyen M."/>
            <person name="Pham P.K."/>
            <person name="Cheuk R.F."/>
            <person name="Karlin-Newmann G."/>
            <person name="Liu S.X."/>
            <person name="Lam B."/>
            <person name="Sakano H."/>
            <person name="Wu T."/>
            <person name="Yu G."/>
            <person name="Miranda M."/>
            <person name="Quach H.L."/>
            <person name="Tripp M."/>
            <person name="Chang C.H."/>
            <person name="Lee J.M."/>
            <person name="Toriumi M.J."/>
            <person name="Chan M.M."/>
            <person name="Tang C.C."/>
            <person name="Onodera C.S."/>
            <person name="Deng J.M."/>
            <person name="Akiyama K."/>
            <person name="Ansari Y."/>
            <person name="Arakawa T."/>
            <person name="Banh J."/>
            <person name="Banno F."/>
            <person name="Bowser L."/>
            <person name="Brooks S.Y."/>
            <person name="Carninci P."/>
            <person name="Chao Q."/>
            <person name="Choy N."/>
            <person name="Enju A."/>
            <person name="Goldsmith A.D."/>
            <person name="Gurjal M."/>
            <person name="Hansen N.F."/>
            <person name="Hayashizaki Y."/>
            <person name="Johnson-Hopson C."/>
            <person name="Hsuan V.W."/>
            <person name="Iida K."/>
            <person name="Karnes M."/>
            <person name="Khan S."/>
            <person name="Koesema E."/>
            <person name="Ishida J."/>
            <person name="Jiang P.X."/>
            <person name="Jones T."/>
            <person name="Kawai J."/>
            <person name="Kamiya A."/>
            <person name="Meyers C."/>
            <person name="Nakajima M."/>
            <person name="Narusaka M."/>
            <person name="Seki M."/>
            <person name="Sakurai T."/>
            <person name="Satou M."/>
            <person name="Tamse R."/>
            <person name="Vaysberg M."/>
            <person name="Wallender E.K."/>
            <person name="Wong C."/>
            <person name="Yamamura Y."/>
            <person name="Yuan S."/>
            <person name="Shinozaki K."/>
            <person name="Davis R.W."/>
            <person name="Theologis A."/>
            <person name="Ecker J.R."/>
        </authorList>
    </citation>
    <scope>NUCLEOTIDE SEQUENCE [LARGE SCALE MRNA]</scope>
    <source>
        <strain>cv. Columbia</strain>
    </source>
</reference>
<reference key="5">
    <citation type="submission" date="2006-07" db="EMBL/GenBank/DDBJ databases">
        <title>Large-scale analysis of RIKEN Arabidopsis full-length (RAFL) cDNAs.</title>
        <authorList>
            <person name="Totoki Y."/>
            <person name="Seki M."/>
            <person name="Ishida J."/>
            <person name="Nakajima M."/>
            <person name="Enju A."/>
            <person name="Kamiya A."/>
            <person name="Narusaka M."/>
            <person name="Shin-i T."/>
            <person name="Nakagawa M."/>
            <person name="Sakamoto N."/>
            <person name="Oishi K."/>
            <person name="Kohara Y."/>
            <person name="Kobayashi M."/>
            <person name="Toyoda A."/>
            <person name="Sakaki Y."/>
            <person name="Sakurai T."/>
            <person name="Iida K."/>
            <person name="Akiyama K."/>
            <person name="Satou M."/>
            <person name="Toyoda T."/>
            <person name="Konagaya A."/>
            <person name="Carninci P."/>
            <person name="Kawai J."/>
            <person name="Hayashizaki Y."/>
            <person name="Shinozaki K."/>
        </authorList>
    </citation>
    <scope>NUCLEOTIDE SEQUENCE [LARGE SCALE MRNA]</scope>
    <source>
        <strain>cv. Columbia</strain>
    </source>
</reference>
<reference key="6">
    <citation type="journal article" date="2014" name="Plant Physiol.">
        <title>The Arabidopsis ZINC FINGER PROTEIN3 interferes with abscisic acid and light signaling in seed germination and plant development.</title>
        <authorList>
            <person name="Joseph M.P."/>
            <person name="Papdi C."/>
            <person name="Kozma-Bognar L."/>
            <person name="Nagy I."/>
            <person name="Lopez-Carbonell M."/>
            <person name="Rigo G."/>
            <person name="Koncz C."/>
            <person name="Szabados L."/>
        </authorList>
    </citation>
    <scope>FUNCTION</scope>
    <scope>DISRUPTION PHENOTYPE</scope>
</reference>
<proteinExistence type="evidence at transcript level"/>
<organism>
    <name type="scientific">Arabidopsis thaliana</name>
    <name type="common">Mouse-ear cress</name>
    <dbReference type="NCBI Taxonomy" id="3702"/>
    <lineage>
        <taxon>Eukaryota</taxon>
        <taxon>Viridiplantae</taxon>
        <taxon>Streptophyta</taxon>
        <taxon>Embryophyta</taxon>
        <taxon>Tracheophyta</taxon>
        <taxon>Spermatophyta</taxon>
        <taxon>Magnoliopsida</taxon>
        <taxon>eudicotyledons</taxon>
        <taxon>Gunneridae</taxon>
        <taxon>Pentapetalae</taxon>
        <taxon>rosids</taxon>
        <taxon>malvids</taxon>
        <taxon>Brassicales</taxon>
        <taxon>Brassicaceae</taxon>
        <taxon>Camelineae</taxon>
        <taxon>Arabidopsis</taxon>
    </lineage>
</organism>
<accession>Q39263</accession>
<accession>Q0WLF4</accession>
<accession>Q9C8D2</accession>
<keyword id="KW-0938">Abscisic acid signaling pathway</keyword>
<keyword id="KW-0479">Metal-binding</keyword>
<keyword id="KW-0539">Nucleus</keyword>
<keyword id="KW-1185">Reference proteome</keyword>
<keyword id="KW-0862">Zinc</keyword>
<keyword id="KW-0863">Zinc-finger</keyword>
<gene>
    <name evidence="5" type="primary">ZFP4</name>
    <name type="ordered locus">At1g66140</name>
    <name type="ORF">F15E12.19</name>
</gene>
<dbReference type="EMBL" id="L39647">
    <property type="protein sequence ID" value="AAA87300.1"/>
    <property type="molecule type" value="mRNA"/>
</dbReference>
<dbReference type="EMBL" id="AC026480">
    <property type="protein sequence ID" value="AAG51296.1"/>
    <property type="molecule type" value="Genomic_DNA"/>
</dbReference>
<dbReference type="EMBL" id="CP002684">
    <property type="protein sequence ID" value="AEE34466.1"/>
    <property type="molecule type" value="Genomic_DNA"/>
</dbReference>
<dbReference type="EMBL" id="AF361630">
    <property type="protein sequence ID" value="AAK32798.1"/>
    <property type="molecule type" value="mRNA"/>
</dbReference>
<dbReference type="EMBL" id="AY058087">
    <property type="protein sequence ID" value="AAL24195.1"/>
    <property type="molecule type" value="mRNA"/>
</dbReference>
<dbReference type="EMBL" id="AY056067">
    <property type="protein sequence ID" value="AAL06967.1"/>
    <property type="molecule type" value="mRNA"/>
</dbReference>
<dbReference type="EMBL" id="AK230229">
    <property type="protein sequence ID" value="BAF02034.1"/>
    <property type="molecule type" value="mRNA"/>
</dbReference>
<dbReference type="EMBL" id="AK230232">
    <property type="protein sequence ID" value="BAF02037.1"/>
    <property type="molecule type" value="mRNA"/>
</dbReference>
<dbReference type="EMBL" id="AK230250">
    <property type="protein sequence ID" value="BAF02053.1"/>
    <property type="molecule type" value="mRNA"/>
</dbReference>
<dbReference type="PIR" id="B96686">
    <property type="entry name" value="B96686"/>
</dbReference>
<dbReference type="PIR" id="S55884">
    <property type="entry name" value="S55884"/>
</dbReference>
<dbReference type="RefSeq" id="NP_176788.1">
    <property type="nucleotide sequence ID" value="NM_105285.3"/>
</dbReference>
<dbReference type="BioGRID" id="28149">
    <property type="interactions" value="4"/>
</dbReference>
<dbReference type="FunCoup" id="Q39263">
    <property type="interactions" value="265"/>
</dbReference>
<dbReference type="IntAct" id="Q39263">
    <property type="interactions" value="2"/>
</dbReference>
<dbReference type="STRING" id="3702.Q39263"/>
<dbReference type="iPTMnet" id="Q39263"/>
<dbReference type="PaxDb" id="3702-AT1G66140.1"/>
<dbReference type="ProteomicsDB" id="242944"/>
<dbReference type="DNASU" id="842928"/>
<dbReference type="EnsemblPlants" id="AT1G66140.1">
    <property type="protein sequence ID" value="AT1G66140.1"/>
    <property type="gene ID" value="AT1G66140"/>
</dbReference>
<dbReference type="GeneID" id="842928"/>
<dbReference type="Gramene" id="AT1G66140.1">
    <property type="protein sequence ID" value="AT1G66140.1"/>
    <property type="gene ID" value="AT1G66140"/>
</dbReference>
<dbReference type="KEGG" id="ath:AT1G66140"/>
<dbReference type="Araport" id="AT1G66140"/>
<dbReference type="TAIR" id="AT1G66140">
    <property type="gene designation" value="ZFP4"/>
</dbReference>
<dbReference type="eggNOG" id="ENOG502QTY7">
    <property type="taxonomic scope" value="Eukaryota"/>
</dbReference>
<dbReference type="HOGENOM" id="CLU_085865_1_0_1"/>
<dbReference type="InParanoid" id="Q39263"/>
<dbReference type="OMA" id="QCKFLSS"/>
<dbReference type="PhylomeDB" id="Q39263"/>
<dbReference type="PRO" id="PR:Q39263"/>
<dbReference type="Proteomes" id="UP000006548">
    <property type="component" value="Chromosome 1"/>
</dbReference>
<dbReference type="ExpressionAtlas" id="Q39263">
    <property type="expression patterns" value="baseline and differential"/>
</dbReference>
<dbReference type="GO" id="GO:0005634">
    <property type="term" value="C:nucleus"/>
    <property type="evidence" value="ECO:0007669"/>
    <property type="project" value="UniProtKB-SubCell"/>
</dbReference>
<dbReference type="GO" id="GO:0003700">
    <property type="term" value="F:DNA-binding transcription factor activity"/>
    <property type="evidence" value="ECO:0000250"/>
    <property type="project" value="TAIR"/>
</dbReference>
<dbReference type="GO" id="GO:0000976">
    <property type="term" value="F:transcription cis-regulatory region binding"/>
    <property type="evidence" value="ECO:0000353"/>
    <property type="project" value="TAIR"/>
</dbReference>
<dbReference type="GO" id="GO:0008270">
    <property type="term" value="F:zinc ion binding"/>
    <property type="evidence" value="ECO:0007669"/>
    <property type="project" value="UniProtKB-KW"/>
</dbReference>
<dbReference type="GO" id="GO:0009738">
    <property type="term" value="P:abscisic acid-activated signaling pathway"/>
    <property type="evidence" value="ECO:0007669"/>
    <property type="project" value="UniProtKB-KW"/>
</dbReference>
<dbReference type="GO" id="GO:0019760">
    <property type="term" value="P:glucosinolate metabolic process"/>
    <property type="evidence" value="ECO:0000315"/>
    <property type="project" value="TAIR"/>
</dbReference>
<dbReference type="GO" id="GO:0009788">
    <property type="term" value="P:negative regulation of abscisic acid-activated signaling pathway"/>
    <property type="evidence" value="ECO:0000315"/>
    <property type="project" value="UniProtKB"/>
</dbReference>
<dbReference type="GO" id="GO:0006355">
    <property type="term" value="P:regulation of DNA-templated transcription"/>
    <property type="evidence" value="ECO:0000304"/>
    <property type="project" value="TAIR"/>
</dbReference>
<dbReference type="FunFam" id="3.30.160.60:FF:001366">
    <property type="entry name" value="Zinc finger protein 2"/>
    <property type="match status" value="1"/>
</dbReference>
<dbReference type="Gene3D" id="3.30.160.60">
    <property type="entry name" value="Classic Zinc Finger"/>
    <property type="match status" value="1"/>
</dbReference>
<dbReference type="InterPro" id="IPR044246">
    <property type="entry name" value="ZFP3-like"/>
</dbReference>
<dbReference type="InterPro" id="IPR036236">
    <property type="entry name" value="Znf_C2H2_sf"/>
</dbReference>
<dbReference type="InterPro" id="IPR013087">
    <property type="entry name" value="Znf_C2H2_type"/>
</dbReference>
<dbReference type="PANTHER" id="PTHR47287">
    <property type="entry name" value="C2H2 AND C2HC ZINC FINGERS SUPERFAMILY PROTEIN"/>
    <property type="match status" value="1"/>
</dbReference>
<dbReference type="PANTHER" id="PTHR47287:SF18">
    <property type="entry name" value="TRANSCRIPTION FACTOR C2H2 FAMILY"/>
    <property type="match status" value="1"/>
</dbReference>
<dbReference type="SUPFAM" id="SSF57667">
    <property type="entry name" value="beta-beta-alpha zinc fingers"/>
    <property type="match status" value="1"/>
</dbReference>
<dbReference type="PROSITE" id="PS00028">
    <property type="entry name" value="ZINC_FINGER_C2H2_1"/>
    <property type="match status" value="1"/>
</dbReference>
<dbReference type="PROSITE" id="PS50157">
    <property type="entry name" value="ZINC_FINGER_C2H2_2"/>
    <property type="match status" value="1"/>
</dbReference>
<protein>
    <recommendedName>
        <fullName evidence="6">Zinc finger protein 4</fullName>
    </recommendedName>
</protein>
<feature type="chain" id="PRO_0000047845" description="Zinc finger protein 4">
    <location>
        <begin position="1"/>
        <end position="260"/>
    </location>
</feature>
<feature type="zinc finger region" description="C2H2-type" evidence="2">
    <location>
        <begin position="85"/>
        <end position="107"/>
    </location>
</feature>
<feature type="region of interest" description="Disordered" evidence="3">
    <location>
        <begin position="1"/>
        <end position="24"/>
    </location>
</feature>
<feature type="region of interest" description="Disordered" evidence="3">
    <location>
        <begin position="51"/>
        <end position="82"/>
    </location>
</feature>
<feature type="compositionally biased region" description="Low complexity" evidence="3">
    <location>
        <begin position="12"/>
        <end position="24"/>
    </location>
</feature>
<feature type="compositionally biased region" description="Low complexity" evidence="3">
    <location>
        <begin position="51"/>
        <end position="79"/>
    </location>
</feature>
<feature type="sequence conflict" description="In Ref. 1; AAA87300." evidence="6" ref="1">
    <original>RMGLAGVFPGRGSSSNYAAAATAAA</original>
    <variation>LWVLLGSSPVEDQVAIMRLLPQQP</variation>
    <location>
        <begin position="119"/>
        <end position="143"/>
    </location>
</feature>
<comment type="function">
    <text evidence="4">Acts as a negative regulator of abscisic acid (ABA) signaling during germination and early seedling development.</text>
</comment>
<comment type="subcellular location">
    <subcellularLocation>
        <location evidence="1">Nucleus</location>
    </subcellularLocation>
</comment>
<comment type="disruption phenotype">
    <text evidence="4">No visible phenotype under normal growth conditions, but mutant seeds are hypersensitivite to inhibition of germination by abscisic acid (ABA).</text>
</comment>
<comment type="miscellaneous">
    <text evidence="4">Seeds over-expressing ZFP4 are insensitive to inhibition of germination by abscisic acid (ABA).</text>
</comment>
<name>ZFP4_ARATH</name>
<evidence type="ECO:0000250" key="1">
    <source>
        <dbReference type="UniProtKB" id="Q39261"/>
    </source>
</evidence>
<evidence type="ECO:0000255" key="2">
    <source>
        <dbReference type="PROSITE-ProRule" id="PRU00042"/>
    </source>
</evidence>
<evidence type="ECO:0000256" key="3">
    <source>
        <dbReference type="SAM" id="MobiDB-lite"/>
    </source>
</evidence>
<evidence type="ECO:0000269" key="4">
    <source>
    </source>
</evidence>
<evidence type="ECO:0000303" key="5">
    <source>
    </source>
</evidence>
<evidence type="ECO:0000305" key="6"/>
<sequence length="260" mass="28309">MRPILDLEIEASSGSSSSQVASNLSPVGEDYKPISLNLSLSFNNNNNNNLDLESSSLTLPLSSTSESSNPEQQQQQQPSVSKRVFSCNYCQRKFYSSQALGGHQNAHKRERTLAKRAMRMGLAGVFPGRGSSSNYAAAATAAALSCLPLHGSGNGNMTSFRTLGIRAHSSAHDVSMTRQTPETLIRNIARFNQGYFGNCIPFYVEDDEAEMLWPGSFRQATNAVAVEAGNDNLGERKMDFLDVKQAMDMESSLPDLTLKL</sequence>